<evidence type="ECO:0000255" key="1">
    <source>
        <dbReference type="PROSITE-ProRule" id="PRU00703"/>
    </source>
</evidence>
<accession>Q58799</accession>
<feature type="chain" id="PRO_0000107313" description="Uncharacterized protein MJ1404">
    <location>
        <begin position="1"/>
        <end position="421"/>
    </location>
</feature>
<feature type="domain" description="CBS 1" evidence="1">
    <location>
        <begin position="13"/>
        <end position="74"/>
    </location>
</feature>
<feature type="domain" description="CBS 2" evidence="1">
    <location>
        <begin position="74"/>
        <end position="133"/>
    </location>
</feature>
<feature type="domain" description="CBS 3" evidence="1">
    <location>
        <begin position="139"/>
        <end position="195"/>
    </location>
</feature>
<feature type="domain" description="CBS 4" evidence="1">
    <location>
        <begin position="217"/>
        <end position="274"/>
    </location>
</feature>
<proteinExistence type="predicted"/>
<organism>
    <name type="scientific">Methanocaldococcus jannaschii (strain ATCC 43067 / DSM 2661 / JAL-1 / JCM 10045 / NBRC 100440)</name>
    <name type="common">Methanococcus jannaschii</name>
    <dbReference type="NCBI Taxonomy" id="243232"/>
    <lineage>
        <taxon>Archaea</taxon>
        <taxon>Methanobacteriati</taxon>
        <taxon>Methanobacteriota</taxon>
        <taxon>Methanomada group</taxon>
        <taxon>Methanococci</taxon>
        <taxon>Methanococcales</taxon>
        <taxon>Methanocaldococcaceae</taxon>
        <taxon>Methanocaldococcus</taxon>
    </lineage>
</organism>
<sequence length="421" mass="47609">MRLMLNEPVKEIMTKDVVTVTPDTPVSKALGIMEENGFHHLIVVDKKDGKEEYYLISMRDLLLASSTDEEVRSLMYKAHCVHEDTPFLDAVCEMLDSGQRAAPIVNNVGKMVGIITDYDIMARAAKSKIMKDTKVTKIMTRNVITINENDSIGKARALMRDNNIGRLVVVDDEGNPVGMVTEVDILKKVFKPKKKMTAGEFKGEKVPRMGQPVRLIMNTPLITVDVDASAADAARVMQEYDIRGVPVVKGKSLRGIVTRLDIIKYIADLKKGAMIEIELHGMLDPEFKDLAERIIATEVKKMVKHAGKIHWIKITIKKERDKGGVPYYRITTYVKTPNKLYVGEGRPKASLPNKLEAEGEDIAYVSEHERWEFIDVLKESLESVLRQLEADYDKYHPKHAGKVVKGQFPEEFNPEEFKKEE</sequence>
<dbReference type="EMBL" id="L77117">
    <property type="protein sequence ID" value="AAB99421.1"/>
    <property type="molecule type" value="Genomic_DNA"/>
</dbReference>
<dbReference type="PIR" id="C64475">
    <property type="entry name" value="C64475"/>
</dbReference>
<dbReference type="SMR" id="Q58799"/>
<dbReference type="FunCoup" id="Q58799">
    <property type="interactions" value="20"/>
</dbReference>
<dbReference type="STRING" id="243232.MJ_1404"/>
<dbReference type="PaxDb" id="243232-MJ_1404"/>
<dbReference type="EnsemblBacteria" id="AAB99421">
    <property type="protein sequence ID" value="AAB99421"/>
    <property type="gene ID" value="MJ_1404"/>
</dbReference>
<dbReference type="KEGG" id="mja:MJ_1404"/>
<dbReference type="eggNOG" id="arCOG00601">
    <property type="taxonomic scope" value="Archaea"/>
</dbReference>
<dbReference type="HOGENOM" id="CLU_656595_0_0_2"/>
<dbReference type="InParanoid" id="Q58799"/>
<dbReference type="PhylomeDB" id="Q58799"/>
<dbReference type="Proteomes" id="UP000000805">
    <property type="component" value="Chromosome"/>
</dbReference>
<dbReference type="Gene3D" id="3.10.580.10">
    <property type="entry name" value="CBS-domain"/>
    <property type="match status" value="2"/>
</dbReference>
<dbReference type="InterPro" id="IPR000644">
    <property type="entry name" value="CBS_dom"/>
</dbReference>
<dbReference type="InterPro" id="IPR046342">
    <property type="entry name" value="CBS_dom_sf"/>
</dbReference>
<dbReference type="InterPro" id="IPR051257">
    <property type="entry name" value="Diverse_CBS-Domain"/>
</dbReference>
<dbReference type="InterPro" id="IPR014651">
    <property type="entry name" value="UCP036983_2CBS_MJ1404"/>
</dbReference>
<dbReference type="PANTHER" id="PTHR43080:SF2">
    <property type="entry name" value="CBS DOMAIN-CONTAINING PROTEIN"/>
    <property type="match status" value="1"/>
</dbReference>
<dbReference type="PANTHER" id="PTHR43080">
    <property type="entry name" value="CBS DOMAIN-CONTAINING PROTEIN CBSX3, MITOCHONDRIAL"/>
    <property type="match status" value="1"/>
</dbReference>
<dbReference type="Pfam" id="PF00571">
    <property type="entry name" value="CBS"/>
    <property type="match status" value="4"/>
</dbReference>
<dbReference type="PIRSF" id="PIRSF036983">
    <property type="entry name" value="UCP_2CBS_MJ1404"/>
    <property type="match status" value="1"/>
</dbReference>
<dbReference type="SMART" id="SM00116">
    <property type="entry name" value="CBS"/>
    <property type="match status" value="4"/>
</dbReference>
<dbReference type="SUPFAM" id="SSF54631">
    <property type="entry name" value="CBS-domain pair"/>
    <property type="match status" value="2"/>
</dbReference>
<dbReference type="PROSITE" id="PS51371">
    <property type="entry name" value="CBS"/>
    <property type="match status" value="4"/>
</dbReference>
<protein>
    <recommendedName>
        <fullName>Uncharacterized protein MJ1404</fullName>
    </recommendedName>
</protein>
<reference key="1">
    <citation type="journal article" date="1996" name="Science">
        <title>Complete genome sequence of the methanogenic archaeon, Methanococcus jannaschii.</title>
        <authorList>
            <person name="Bult C.J."/>
            <person name="White O."/>
            <person name="Olsen G.J."/>
            <person name="Zhou L."/>
            <person name="Fleischmann R.D."/>
            <person name="Sutton G.G."/>
            <person name="Blake J.A."/>
            <person name="FitzGerald L.M."/>
            <person name="Clayton R.A."/>
            <person name="Gocayne J.D."/>
            <person name="Kerlavage A.R."/>
            <person name="Dougherty B.A."/>
            <person name="Tomb J.-F."/>
            <person name="Adams M.D."/>
            <person name="Reich C.I."/>
            <person name="Overbeek R."/>
            <person name="Kirkness E.F."/>
            <person name="Weinstock K.G."/>
            <person name="Merrick J.M."/>
            <person name="Glodek A."/>
            <person name="Scott J.L."/>
            <person name="Geoghagen N.S.M."/>
            <person name="Weidman J.F."/>
            <person name="Fuhrmann J.L."/>
            <person name="Nguyen D."/>
            <person name="Utterback T.R."/>
            <person name="Kelley J.M."/>
            <person name="Peterson J.D."/>
            <person name="Sadow P.W."/>
            <person name="Hanna M.C."/>
            <person name="Cotton M.D."/>
            <person name="Roberts K.M."/>
            <person name="Hurst M.A."/>
            <person name="Kaine B.P."/>
            <person name="Borodovsky M."/>
            <person name="Klenk H.-P."/>
            <person name="Fraser C.M."/>
            <person name="Smith H.O."/>
            <person name="Woese C.R."/>
            <person name="Venter J.C."/>
        </authorList>
    </citation>
    <scope>NUCLEOTIDE SEQUENCE [LARGE SCALE GENOMIC DNA]</scope>
    <source>
        <strain>ATCC 43067 / DSM 2661 / JAL-1 / JCM 10045 / NBRC 100440</strain>
    </source>
</reference>
<keyword id="KW-0129">CBS domain</keyword>
<keyword id="KW-1185">Reference proteome</keyword>
<keyword id="KW-0677">Repeat</keyword>
<gene>
    <name type="ordered locus">MJ1404</name>
</gene>
<name>Y1404_METJA</name>